<dbReference type="EC" id="2.7.4.6" evidence="1"/>
<dbReference type="EMBL" id="AP010918">
    <property type="protein sequence ID" value="BAH26741.1"/>
    <property type="molecule type" value="Genomic_DNA"/>
</dbReference>
<dbReference type="RefSeq" id="WP_003412592.1">
    <property type="nucleotide sequence ID" value="NZ_CP014566.1"/>
</dbReference>
<dbReference type="SMR" id="C1AER2"/>
<dbReference type="GeneID" id="45426435"/>
<dbReference type="KEGG" id="mbt:JTY_2459"/>
<dbReference type="HOGENOM" id="CLU_060216_6_3_11"/>
<dbReference type="GO" id="GO:0005737">
    <property type="term" value="C:cytoplasm"/>
    <property type="evidence" value="ECO:0007669"/>
    <property type="project" value="UniProtKB-SubCell"/>
</dbReference>
<dbReference type="GO" id="GO:0005524">
    <property type="term" value="F:ATP binding"/>
    <property type="evidence" value="ECO:0007669"/>
    <property type="project" value="UniProtKB-UniRule"/>
</dbReference>
<dbReference type="GO" id="GO:0046872">
    <property type="term" value="F:metal ion binding"/>
    <property type="evidence" value="ECO:0007669"/>
    <property type="project" value="UniProtKB-KW"/>
</dbReference>
<dbReference type="GO" id="GO:0004550">
    <property type="term" value="F:nucleoside diphosphate kinase activity"/>
    <property type="evidence" value="ECO:0007669"/>
    <property type="project" value="UniProtKB-UniRule"/>
</dbReference>
<dbReference type="GO" id="GO:0006241">
    <property type="term" value="P:CTP biosynthetic process"/>
    <property type="evidence" value="ECO:0007669"/>
    <property type="project" value="UniProtKB-UniRule"/>
</dbReference>
<dbReference type="GO" id="GO:0006183">
    <property type="term" value="P:GTP biosynthetic process"/>
    <property type="evidence" value="ECO:0007669"/>
    <property type="project" value="UniProtKB-UniRule"/>
</dbReference>
<dbReference type="GO" id="GO:0006228">
    <property type="term" value="P:UTP biosynthetic process"/>
    <property type="evidence" value="ECO:0007669"/>
    <property type="project" value="UniProtKB-UniRule"/>
</dbReference>
<dbReference type="CDD" id="cd04413">
    <property type="entry name" value="NDPk_I"/>
    <property type="match status" value="1"/>
</dbReference>
<dbReference type="FunFam" id="3.30.70.141:FF:000003">
    <property type="entry name" value="Nucleoside diphosphate kinase"/>
    <property type="match status" value="1"/>
</dbReference>
<dbReference type="Gene3D" id="3.30.70.141">
    <property type="entry name" value="Nucleoside diphosphate kinase-like domain"/>
    <property type="match status" value="1"/>
</dbReference>
<dbReference type="HAMAP" id="MF_00451">
    <property type="entry name" value="NDP_kinase"/>
    <property type="match status" value="1"/>
</dbReference>
<dbReference type="InterPro" id="IPR034907">
    <property type="entry name" value="NDK-like_dom"/>
</dbReference>
<dbReference type="InterPro" id="IPR036850">
    <property type="entry name" value="NDK-like_dom_sf"/>
</dbReference>
<dbReference type="InterPro" id="IPR001564">
    <property type="entry name" value="Nucleoside_diP_kinase"/>
</dbReference>
<dbReference type="NCBIfam" id="NF001908">
    <property type="entry name" value="PRK00668.1"/>
    <property type="match status" value="1"/>
</dbReference>
<dbReference type="PANTHER" id="PTHR11349">
    <property type="entry name" value="NUCLEOSIDE DIPHOSPHATE KINASE"/>
    <property type="match status" value="1"/>
</dbReference>
<dbReference type="Pfam" id="PF00334">
    <property type="entry name" value="NDK"/>
    <property type="match status" value="1"/>
</dbReference>
<dbReference type="PRINTS" id="PR01243">
    <property type="entry name" value="NUCDPKINASE"/>
</dbReference>
<dbReference type="SMART" id="SM00562">
    <property type="entry name" value="NDK"/>
    <property type="match status" value="1"/>
</dbReference>
<dbReference type="SUPFAM" id="SSF54919">
    <property type="entry name" value="Nucleoside diphosphate kinase, NDK"/>
    <property type="match status" value="1"/>
</dbReference>
<dbReference type="PROSITE" id="PS51374">
    <property type="entry name" value="NDPK_LIKE"/>
    <property type="match status" value="1"/>
</dbReference>
<sequence length="136" mass="14508">MTERTLVLIKPDGIERQLIGEIISRIERKGLTIAALQLRTVSAELASQHYAEHEGKPFFGSLLEFITSGPVVAAIVEGTRAIAAVRQLAGGTDPVQAAAPGTIRGDFALETQFNLVHGSDSAESAQREIALWFPGA</sequence>
<comment type="function">
    <text evidence="1">Major role in the synthesis of nucleoside triphosphates other than ATP. The ATP gamma phosphate is transferred to the NDP beta phosphate via a ping-pong mechanism, using a phosphorylated active-site intermediate.</text>
</comment>
<comment type="catalytic activity">
    <reaction evidence="1">
        <text>a 2'-deoxyribonucleoside 5'-diphosphate + ATP = a 2'-deoxyribonucleoside 5'-triphosphate + ADP</text>
        <dbReference type="Rhea" id="RHEA:44640"/>
        <dbReference type="ChEBI" id="CHEBI:30616"/>
        <dbReference type="ChEBI" id="CHEBI:61560"/>
        <dbReference type="ChEBI" id="CHEBI:73316"/>
        <dbReference type="ChEBI" id="CHEBI:456216"/>
        <dbReference type="EC" id="2.7.4.6"/>
    </reaction>
</comment>
<comment type="catalytic activity">
    <reaction evidence="1">
        <text>a ribonucleoside 5'-diphosphate + ATP = a ribonucleoside 5'-triphosphate + ADP</text>
        <dbReference type="Rhea" id="RHEA:18113"/>
        <dbReference type="ChEBI" id="CHEBI:30616"/>
        <dbReference type="ChEBI" id="CHEBI:57930"/>
        <dbReference type="ChEBI" id="CHEBI:61557"/>
        <dbReference type="ChEBI" id="CHEBI:456216"/>
        <dbReference type="EC" id="2.7.4.6"/>
    </reaction>
</comment>
<comment type="cofactor">
    <cofactor evidence="1">
        <name>Mg(2+)</name>
        <dbReference type="ChEBI" id="CHEBI:18420"/>
    </cofactor>
</comment>
<comment type="subunit">
    <text evidence="1">Homotetramer.</text>
</comment>
<comment type="subcellular location">
    <subcellularLocation>
        <location evidence="1">Cytoplasm</location>
    </subcellularLocation>
</comment>
<comment type="similarity">
    <text evidence="1">Belongs to the NDK family.</text>
</comment>
<organism>
    <name type="scientific">Mycobacterium bovis (strain BCG / Tokyo 172 / ATCC 35737 / TMC 1019)</name>
    <dbReference type="NCBI Taxonomy" id="561275"/>
    <lineage>
        <taxon>Bacteria</taxon>
        <taxon>Bacillati</taxon>
        <taxon>Actinomycetota</taxon>
        <taxon>Actinomycetes</taxon>
        <taxon>Mycobacteriales</taxon>
        <taxon>Mycobacteriaceae</taxon>
        <taxon>Mycobacterium</taxon>
        <taxon>Mycobacterium tuberculosis complex</taxon>
    </lineage>
</organism>
<name>NDK_MYCBT</name>
<reference key="1">
    <citation type="journal article" date="2009" name="Vaccine">
        <title>Whole genome sequence analysis of Mycobacterium bovis bacillus Calmette-Guerin (BCG) Tokyo 172: a comparative study of BCG vaccine substrains.</title>
        <authorList>
            <person name="Seki M."/>
            <person name="Honda I."/>
            <person name="Fujita I."/>
            <person name="Yano I."/>
            <person name="Yamamoto S."/>
            <person name="Koyama A."/>
        </authorList>
    </citation>
    <scope>NUCLEOTIDE SEQUENCE [LARGE SCALE GENOMIC DNA]</scope>
    <source>
        <strain>BCG / Tokyo 172 / ATCC 35737 / TMC 1019</strain>
    </source>
</reference>
<feature type="chain" id="PRO_1000192275" description="Nucleoside diphosphate kinase">
    <location>
        <begin position="1"/>
        <end position="136"/>
    </location>
</feature>
<feature type="active site" description="Pros-phosphohistidine intermediate" evidence="1">
    <location>
        <position position="117"/>
    </location>
</feature>
<feature type="binding site" evidence="1">
    <location>
        <position position="10"/>
    </location>
    <ligand>
        <name>ATP</name>
        <dbReference type="ChEBI" id="CHEBI:30616"/>
    </ligand>
</feature>
<feature type="binding site" evidence="1">
    <location>
        <position position="58"/>
    </location>
    <ligand>
        <name>ATP</name>
        <dbReference type="ChEBI" id="CHEBI:30616"/>
    </ligand>
</feature>
<feature type="binding site" evidence="1">
    <location>
        <position position="86"/>
    </location>
    <ligand>
        <name>ATP</name>
        <dbReference type="ChEBI" id="CHEBI:30616"/>
    </ligand>
</feature>
<feature type="binding site" evidence="1">
    <location>
        <position position="92"/>
    </location>
    <ligand>
        <name>ATP</name>
        <dbReference type="ChEBI" id="CHEBI:30616"/>
    </ligand>
</feature>
<feature type="binding site" evidence="1">
    <location>
        <position position="104"/>
    </location>
    <ligand>
        <name>ATP</name>
        <dbReference type="ChEBI" id="CHEBI:30616"/>
    </ligand>
</feature>
<feature type="binding site" evidence="1">
    <location>
        <position position="114"/>
    </location>
    <ligand>
        <name>ATP</name>
        <dbReference type="ChEBI" id="CHEBI:30616"/>
    </ligand>
</feature>
<protein>
    <recommendedName>
        <fullName evidence="1">Nucleoside diphosphate kinase</fullName>
        <shortName evidence="1">NDK</shortName>
        <shortName evidence="1">NDP kinase</shortName>
        <ecNumber evidence="1">2.7.4.6</ecNumber>
    </recommendedName>
    <alternativeName>
        <fullName evidence="1">Nucleoside-2-P kinase</fullName>
    </alternativeName>
</protein>
<proteinExistence type="inferred from homology"/>
<accession>C1AER2</accession>
<gene>
    <name evidence="1" type="primary">ndk</name>
    <name type="ordered locus">JTY_2459</name>
</gene>
<evidence type="ECO:0000255" key="1">
    <source>
        <dbReference type="HAMAP-Rule" id="MF_00451"/>
    </source>
</evidence>
<keyword id="KW-0067">ATP-binding</keyword>
<keyword id="KW-0963">Cytoplasm</keyword>
<keyword id="KW-0418">Kinase</keyword>
<keyword id="KW-0460">Magnesium</keyword>
<keyword id="KW-0479">Metal-binding</keyword>
<keyword id="KW-0546">Nucleotide metabolism</keyword>
<keyword id="KW-0547">Nucleotide-binding</keyword>
<keyword id="KW-0597">Phosphoprotein</keyword>
<keyword id="KW-0808">Transferase</keyword>